<protein>
    <recommendedName>
        <fullName>Bacteriocin sakacin-P</fullName>
    </recommendedName>
    <alternativeName>
        <fullName>Sakacin 674</fullName>
    </alternativeName>
</protein>
<evidence type="ECO:0000269" key="1">
    <source>
    </source>
</evidence>
<evidence type="ECO:0000269" key="2">
    <source>
    </source>
</evidence>
<evidence type="ECO:0000269" key="3">
    <source ref="4"/>
</evidence>
<evidence type="ECO:0000305" key="4"/>
<evidence type="ECO:0007829" key="5">
    <source>
        <dbReference type="PDB" id="1OG7"/>
    </source>
</evidence>
<organism>
    <name type="scientific">Latilactobacillus sakei</name>
    <name type="common">Lactobacillus sakei</name>
    <dbReference type="NCBI Taxonomy" id="1599"/>
    <lineage>
        <taxon>Bacteria</taxon>
        <taxon>Bacillati</taxon>
        <taxon>Bacillota</taxon>
        <taxon>Bacilli</taxon>
        <taxon>Lactobacillales</taxon>
        <taxon>Lactobacillaceae</taxon>
        <taxon>Latilactobacillus</taxon>
    </lineage>
</organism>
<accession>P35618</accession>
<accession>Q57121</accession>
<keyword id="KW-0002">3D-structure</keyword>
<keyword id="KW-0044">Antibiotic</keyword>
<keyword id="KW-0929">Antimicrobial</keyword>
<keyword id="KW-0078">Bacteriocin</keyword>
<keyword id="KW-0903">Direct protein sequencing</keyword>
<keyword id="KW-1015">Disulfide bond</keyword>
<keyword id="KW-0964">Secreted</keyword>
<dbReference type="EMBL" id="X75081">
    <property type="protein sequence ID" value="CAA52974.1"/>
    <property type="molecule type" value="Genomic_DNA"/>
</dbReference>
<dbReference type="EMBL" id="Z25816">
    <property type="protein sequence ID" value="CAA81064.1"/>
    <property type="molecule type" value="Genomic_DNA"/>
</dbReference>
<dbReference type="EMBL" id="Z48542">
    <property type="protein sequence ID" value="CAA88428.1"/>
    <property type="molecule type" value="Genomic_DNA"/>
</dbReference>
<dbReference type="EMBL" id="AF002276">
    <property type="protein sequence ID" value="AAB93970.1"/>
    <property type="molecule type" value="Genomic_DNA"/>
</dbReference>
<dbReference type="PIR" id="S57911">
    <property type="entry name" value="S38508"/>
</dbReference>
<dbReference type="RefSeq" id="WP_004271264.1">
    <property type="nucleotide sequence ID" value="NZ_LT960790.1"/>
</dbReference>
<dbReference type="PDB" id="1OG7">
    <property type="method" value="NMR"/>
    <property type="chains" value="A=19-61"/>
</dbReference>
<dbReference type="PDB" id="1OHM">
    <property type="method" value="NMR"/>
    <property type="chains" value="A=19-61"/>
</dbReference>
<dbReference type="PDB" id="1OHN">
    <property type="method" value="NMR"/>
    <property type="chains" value="A=19-61"/>
</dbReference>
<dbReference type="PDBsum" id="1OG7"/>
<dbReference type="PDBsum" id="1OHM"/>
<dbReference type="PDBsum" id="1OHN"/>
<dbReference type="SMR" id="P35618"/>
<dbReference type="TCDB" id="1.C.24.1.2">
    <property type="family name" value="the pediocin (pediocin) family"/>
</dbReference>
<dbReference type="EvolutionaryTrace" id="P35618"/>
<dbReference type="GO" id="GO:0005576">
    <property type="term" value="C:extracellular region"/>
    <property type="evidence" value="ECO:0007669"/>
    <property type="project" value="UniProtKB-SubCell"/>
</dbReference>
<dbReference type="GO" id="GO:0042742">
    <property type="term" value="P:defense response to bacterium"/>
    <property type="evidence" value="ECO:0007669"/>
    <property type="project" value="UniProtKB-KW"/>
</dbReference>
<dbReference type="GO" id="GO:0031640">
    <property type="term" value="P:killing of cells of another organism"/>
    <property type="evidence" value="ECO:0007669"/>
    <property type="project" value="UniProtKB-KW"/>
</dbReference>
<dbReference type="Gene3D" id="1.20.5.130">
    <property type="match status" value="1"/>
</dbReference>
<dbReference type="InterPro" id="IPR002633">
    <property type="entry name" value="Bacteriocin_IIa"/>
</dbReference>
<dbReference type="InterPro" id="IPR023384">
    <property type="entry name" value="Bacteriocin_IIa_CS"/>
</dbReference>
<dbReference type="InterPro" id="IPR023388">
    <property type="entry name" value="Bacteriocin_IIa_dom_sf"/>
</dbReference>
<dbReference type="Pfam" id="PF01721">
    <property type="entry name" value="Bacteriocin_II"/>
    <property type="match status" value="1"/>
</dbReference>
<dbReference type="PROSITE" id="PS60030">
    <property type="entry name" value="BACTERIOCIN_IIA"/>
    <property type="match status" value="1"/>
</dbReference>
<sequence>MEKFIELSLKEVTAITGGKYYGNGVHCGKHSCTVDWGTAIGNIGNNAAANWATGGNAGWNK</sequence>
<feature type="propeptide" id="PRO_0000002751" evidence="2 3">
    <location>
        <begin position="1"/>
        <end position="18"/>
    </location>
</feature>
<feature type="chain" id="PRO_0000002752" description="Bacteriocin sakacin-P">
    <location>
        <begin position="19"/>
        <end position="61"/>
    </location>
</feature>
<feature type="disulfide bond" evidence="1">
    <location>
        <begin position="27"/>
        <end position="32"/>
    </location>
</feature>
<feature type="strand" evidence="5">
    <location>
        <begin position="20"/>
        <end position="22"/>
    </location>
</feature>
<feature type="strand" evidence="5">
    <location>
        <begin position="28"/>
        <end position="30"/>
    </location>
</feature>
<feature type="helix" evidence="5">
    <location>
        <begin position="37"/>
        <end position="50"/>
    </location>
</feature>
<feature type="turn" evidence="5">
    <location>
        <begin position="53"/>
        <end position="59"/>
    </location>
</feature>
<gene>
    <name type="primary">sakP</name>
    <name type="synonym">sakR</name>
    <name type="synonym">sppA</name>
</gene>
<name>SAKP_LATSK</name>
<reference key="1">
    <citation type="journal article" date="1994" name="Microbiology">
        <title>Cloning and sequencing of sakP encoding sakacin P, the bacteriocin produced by Lactobacillus sake LTH 673.</title>
        <authorList>
            <person name="Tichaczek P.S."/>
            <person name="Vogel R.F."/>
            <person name="Hammes W.P."/>
        </authorList>
    </citation>
    <scope>NUCLEOTIDE SEQUENCE [GENOMIC DNA]</scope>
    <source>
        <strain>LTH673</strain>
    </source>
</reference>
<reference key="2">
    <citation type="journal article" date="1994" name="FEMS Microbiol. Lett.">
        <title>Purification and cloning of sakacin 674, a bacteriocin from Lactobacillus sake Lb674.</title>
        <authorList>
            <person name="Holck A.L."/>
            <person name="Axelsson L."/>
            <person name="Huehne K."/>
            <person name="Kroeckel L."/>
        </authorList>
    </citation>
    <scope>NUCLEOTIDE SEQUENCE [GENOMIC DNA]</scope>
    <scope>PROTEIN SEQUENCE OF 19-61</scope>
    <scope>CHARACTERIZATION</scope>
    <source>
        <strain>Lb674</strain>
    </source>
</reference>
<reference key="3">
    <citation type="journal article" date="1996" name="Microbiology">
        <title>Analysis of the sakacin P gene cluster from Lactobacillus sake Lb674 and its expression in sakacin-negative Lb. sake strains.</title>
        <authorList>
            <person name="Huehne K."/>
            <person name="Axelsson L."/>
            <person name="Holck A."/>
            <person name="Kroeckel L."/>
        </authorList>
    </citation>
    <scope>NUCLEOTIDE SEQUENCE [GENOMIC DNA]</scope>
    <source>
        <strain>Lb674</strain>
    </source>
</reference>
<reference key="4">
    <citation type="journal article" date="1992" name="Syst. Appl. Microbiol.">
        <title>Characterization of the bacteriocins curvacin A from Lactobacillus curvatus LTH1174 and sakacin P from L. sake LTH673.</title>
        <authorList>
            <person name="Tichaczek P.S."/>
            <person name="Nissen-Meyer J."/>
            <person name="Nes I.F."/>
            <person name="Vogel R.F."/>
            <person name="Hammes W.P."/>
        </authorList>
    </citation>
    <scope>PROTEIN SEQUENCE OF 19-59</scope>
    <scope>CHARACTERIZATION</scope>
    <source>
        <strain>LTH673</strain>
    </source>
</reference>
<reference key="5">
    <citation type="journal article" date="2003" name="Biochemistry">
        <title>Three-dimensional structure in lipid micelles of the pediocin-like antimicrobial peptide sakacin P and a sakacin P variant that is structurally stabilized by an inserted C-terminal disulfide bridge.</title>
        <authorList>
            <person name="Uteng M."/>
            <person name="Hauge H.H."/>
            <person name="Markwick P.R."/>
            <person name="Fimland G."/>
            <person name="Mantzilas D."/>
            <person name="Nissen-Meyer J."/>
            <person name="Muhle-Goll C."/>
        </authorList>
    </citation>
    <scope>STRUCTURE BY NMR OF 19-61</scope>
    <scope>DISULFIDE BOND</scope>
</reference>
<comment type="function">
    <text>Bactericidal activity; inhibits closely related Lactobacilli, Listeria monocytogenes and ivanovvi, Enterococcus faecalis, Carnobacterium sp and Brocothrix thermosphacta.</text>
</comment>
<comment type="subcellular location">
    <subcellularLocation>
        <location>Secreted</location>
    </subcellularLocation>
</comment>
<comment type="similarity">
    <text evidence="4">Belongs to the bacteriocin class IIA/YGNGV family.</text>
</comment>
<proteinExistence type="evidence at protein level"/>